<comment type="function">
    <text evidence="1">Part of the gene cluster that mediates the biosynthesis of verlamelin, a lipopeptide that exhibits antifungal activity against plant pathogenic fungi (PubMed:24848421). Verlamelin is a cyclic hexadepsipeptide and is bridged by ester bonding between a 5-hydroxytetradecanoic acid moiety and a carboxyl group on the terminal Val of amide-bonded tetradecanoyl-hexapeptide D-allo-Thr-D-Ala-L-Pro-L-Gln-D-Tyr-L-Val (PubMed:24848421). VlmA and vlmB are altogether regarded as essential components in the biosynthesis of 5-hydroxytetradecanoic acid (PubMed:24848421). VlmA catalyzes the hydroxylation at position C5 of tetradecanoic acid produced in primary metabolism, while the precise function of vlmB still remains to be solved (PubMed:24848421). To be loaded onto the waiting NRPS, 5-hydroxytetradecanoic acid is activated in the form of acyladenylate by the AMP-dependent ligase vlmC (PubMed:24848421). VlmS seems to accept the fatty-acyl intermediate onto the initial module to further elongate amino acid residues by the downstream modules (PubMed:24848421). In addition, in the last module at its C-terminus, vlmS contains a surplus condensation (C) domain that may be involved in cyclization, the last step to form verlamelin (PubMed:24848421).</text>
</comment>
<comment type="pathway">
    <text evidence="1">Secondary metabolite biosynthesis.</text>
</comment>
<comment type="disruption phenotype">
    <text evidence="1">Leads to highly reduced verlamelin production (PubMed:24848421).</text>
</comment>
<gene>
    <name evidence="2" type="primary">vlmB</name>
</gene>
<protein>
    <recommendedName>
        <fullName evidence="2">Verlamelin biosynthesis protein B</fullName>
    </recommendedName>
</protein>
<accession>A0A024F8Y4</accession>
<feature type="chain" id="PRO_0000438570" description="Verlamelin biosynthesis protein B">
    <location>
        <begin position="1"/>
        <end position="231"/>
    </location>
</feature>
<evidence type="ECO:0000269" key="1">
    <source>
    </source>
</evidence>
<evidence type="ECO:0000303" key="2">
    <source>
    </source>
</evidence>
<sequence>MEVKKLEFIGPRVMPGGQKEMDYFCQVPEFQQRCQSGNAVVIPRRDQVADGRGSTGKLFSQTLNTADTIPHCIVMFEDTYTAQSSTQPWLPISTCSVFYQLGEGVCGFGNICHGGIQTTLLDDVMGVLGVLNARLQDGIIPSKVPGAYWPRNNPGMVDLTKSLFATQGIEVKFLRPLRTPQVIEVSAQLVDMDVSGGSFTVQCVIRDMKGKQYAVANANWVIHTPRPRSRL</sequence>
<dbReference type="EMBL" id="AB862314">
    <property type="protein sequence ID" value="BAO73254.1"/>
    <property type="molecule type" value="Genomic_DNA"/>
</dbReference>
<dbReference type="SMR" id="A0A024F8Y4"/>
<dbReference type="CDD" id="cd03443">
    <property type="entry name" value="PaaI_thioesterase"/>
    <property type="match status" value="1"/>
</dbReference>
<dbReference type="Gene3D" id="3.10.129.10">
    <property type="entry name" value="Hotdog Thioesterase"/>
    <property type="match status" value="1"/>
</dbReference>
<dbReference type="InterPro" id="IPR029069">
    <property type="entry name" value="HotDog_dom_sf"/>
</dbReference>
<dbReference type="InterPro" id="IPR052061">
    <property type="entry name" value="PTE-AB_protein"/>
</dbReference>
<dbReference type="PANTHER" id="PTHR47260:SF6">
    <property type="entry name" value="THIOESTERASE DOMAIN-CONTAINING PROTEIN"/>
    <property type="match status" value="1"/>
</dbReference>
<dbReference type="PANTHER" id="PTHR47260">
    <property type="entry name" value="UPF0644 PROTEIN PB2B4.06"/>
    <property type="match status" value="1"/>
</dbReference>
<dbReference type="SUPFAM" id="SSF54637">
    <property type="entry name" value="Thioesterase/thiol ester dehydrase-isomerase"/>
    <property type="match status" value="1"/>
</dbReference>
<keyword id="KW-0843">Virulence</keyword>
<proteinExistence type="predicted"/>
<organism>
    <name type="scientific">Lecanicillium sp</name>
    <dbReference type="NCBI Taxonomy" id="1756136"/>
    <lineage>
        <taxon>Eukaryota</taxon>
        <taxon>Fungi</taxon>
        <taxon>Dikarya</taxon>
        <taxon>Ascomycota</taxon>
        <taxon>Pezizomycotina</taxon>
        <taxon>Sordariomycetes</taxon>
        <taxon>Hypocreomycetidae</taxon>
        <taxon>Hypocreales</taxon>
        <taxon>Cordycipitaceae</taxon>
        <taxon>Lecanicillium</taxon>
    </lineage>
</organism>
<name>VLMB_LECSP</name>
<reference key="1">
    <citation type="journal article" date="2014" name="Appl. Microbiol. Biotechnol.">
        <title>Identification of a gene cluster responsible for the biosynthesis of cyclic lipopeptide verlamelin.</title>
        <authorList>
            <person name="Ishidoh K."/>
            <person name="Kinoshita H."/>
            <person name="Nihira T."/>
        </authorList>
    </citation>
    <scope>NUCLEOTIDE SEQUENCE [GENOMIC DNA]</scope>
    <scope>FUNCTION</scope>
    <scope>DISRUPTION PHENOTYPE</scope>
    <scope>PATHWAY</scope>
    <source>
        <strain>HF627</strain>
    </source>
</reference>